<feature type="initiator methionine" description="Removed" evidence="1">
    <location>
        <position position="1"/>
    </location>
</feature>
<feature type="chain" id="PRO_0000177301" description="Large ribosomal subunit protein bL20c">
    <location>
        <begin position="2"/>
        <end position="119"/>
    </location>
</feature>
<evidence type="ECO:0000250" key="1"/>
<evidence type="ECO:0000305" key="2"/>
<gene>
    <name type="primary">rpl20</name>
    <name type="ordered locus">LOC_Osp1g00580</name>
</gene>
<proteinExistence type="inferred from homology"/>
<accession>P12139</accession>
<name>RK20_ORYSJ</name>
<protein>
    <recommendedName>
        <fullName evidence="2">Large ribosomal subunit protein bL20c</fullName>
    </recommendedName>
    <alternativeName>
        <fullName>50S ribosomal protein L20, chloroplastic</fullName>
    </alternativeName>
</protein>
<sequence length="119" mass="14346">MTRVPRGYIARRRRAKMRSFASNFRGAHLRLNRMITQQVRRAFVSSHRDRVRQKRDFRRLWISRINAATRIHKVFDNYSKLIHNLYKKELILNRKILAQVAVLNSNNLYTISNKIKIIN</sequence>
<keyword id="KW-0150">Chloroplast</keyword>
<keyword id="KW-0934">Plastid</keyword>
<keyword id="KW-1185">Reference proteome</keyword>
<keyword id="KW-0687">Ribonucleoprotein</keyword>
<keyword id="KW-0689">Ribosomal protein</keyword>
<keyword id="KW-0694">RNA-binding</keyword>
<keyword id="KW-0699">rRNA-binding</keyword>
<dbReference type="EMBL" id="X15901">
    <property type="protein sequence ID" value="CAA33971.1"/>
    <property type="molecule type" value="Genomic_DNA"/>
</dbReference>
<dbReference type="EMBL" id="AY522330">
    <property type="status" value="NOT_ANNOTATED_CDS"/>
    <property type="molecule type" value="Genomic_DNA"/>
</dbReference>
<dbReference type="PIR" id="JQ0249">
    <property type="entry name" value="R5RZ20"/>
</dbReference>
<dbReference type="RefSeq" id="NP_039409.1">
    <property type="nucleotide sequence ID" value="NC_001320.1"/>
</dbReference>
<dbReference type="SMR" id="P12139"/>
<dbReference type="FunCoup" id="P12139">
    <property type="interactions" value="128"/>
</dbReference>
<dbReference type="STRING" id="39947.P12139"/>
<dbReference type="PaxDb" id="39947-P12139"/>
<dbReference type="EnsemblPlants" id="transcript-rpl20">
    <property type="protein sequence ID" value="cds-CAA33971.1"/>
    <property type="gene ID" value="gene-rpl20"/>
</dbReference>
<dbReference type="GeneID" id="3131425"/>
<dbReference type="Gramene" id="transcript-rpl20">
    <property type="protein sequence ID" value="cds-CAA33971.1"/>
    <property type="gene ID" value="gene-rpl20"/>
</dbReference>
<dbReference type="KEGG" id="dosa:rpl20"/>
<dbReference type="KEGG" id="osa:3131425"/>
<dbReference type="InParanoid" id="P12139"/>
<dbReference type="OrthoDB" id="512793at2759"/>
<dbReference type="Proteomes" id="UP000059680">
    <property type="component" value="Chloroplast"/>
</dbReference>
<dbReference type="GO" id="GO:0009507">
    <property type="term" value="C:chloroplast"/>
    <property type="evidence" value="ECO:0007669"/>
    <property type="project" value="UniProtKB-SubCell"/>
</dbReference>
<dbReference type="GO" id="GO:0009536">
    <property type="term" value="C:plastid"/>
    <property type="evidence" value="ECO:0000250"/>
    <property type="project" value="Gramene"/>
</dbReference>
<dbReference type="GO" id="GO:1990904">
    <property type="term" value="C:ribonucleoprotein complex"/>
    <property type="evidence" value="ECO:0007669"/>
    <property type="project" value="UniProtKB-KW"/>
</dbReference>
<dbReference type="GO" id="GO:0005840">
    <property type="term" value="C:ribosome"/>
    <property type="evidence" value="ECO:0007669"/>
    <property type="project" value="UniProtKB-KW"/>
</dbReference>
<dbReference type="GO" id="GO:0019843">
    <property type="term" value="F:rRNA binding"/>
    <property type="evidence" value="ECO:0007669"/>
    <property type="project" value="UniProtKB-UniRule"/>
</dbReference>
<dbReference type="GO" id="GO:0003735">
    <property type="term" value="F:structural constituent of ribosome"/>
    <property type="evidence" value="ECO:0000318"/>
    <property type="project" value="GO_Central"/>
</dbReference>
<dbReference type="GO" id="GO:0000027">
    <property type="term" value="P:ribosomal large subunit assembly"/>
    <property type="evidence" value="ECO:0007669"/>
    <property type="project" value="UniProtKB-UniRule"/>
</dbReference>
<dbReference type="GO" id="GO:0006412">
    <property type="term" value="P:translation"/>
    <property type="evidence" value="ECO:0007669"/>
    <property type="project" value="InterPro"/>
</dbReference>
<dbReference type="CDD" id="cd07026">
    <property type="entry name" value="Ribosomal_L20"/>
    <property type="match status" value="1"/>
</dbReference>
<dbReference type="FunFam" id="1.10.1900.20:FF:000002">
    <property type="entry name" value="50S ribosomal protein L20, chloroplastic"/>
    <property type="match status" value="1"/>
</dbReference>
<dbReference type="Gene3D" id="6.10.160.10">
    <property type="match status" value="1"/>
</dbReference>
<dbReference type="Gene3D" id="1.10.1900.20">
    <property type="entry name" value="Ribosomal protein L20"/>
    <property type="match status" value="1"/>
</dbReference>
<dbReference type="HAMAP" id="MF_00382">
    <property type="entry name" value="Ribosomal_bL20"/>
    <property type="match status" value="1"/>
</dbReference>
<dbReference type="InterPro" id="IPR005813">
    <property type="entry name" value="Ribosomal_bL20"/>
</dbReference>
<dbReference type="InterPro" id="IPR049946">
    <property type="entry name" value="RIBOSOMAL_L20_CS"/>
</dbReference>
<dbReference type="InterPro" id="IPR035566">
    <property type="entry name" value="Ribosomal_protein_bL20_C"/>
</dbReference>
<dbReference type="NCBIfam" id="TIGR01032">
    <property type="entry name" value="rplT_bact"/>
    <property type="match status" value="1"/>
</dbReference>
<dbReference type="PANTHER" id="PTHR10986">
    <property type="entry name" value="39S RIBOSOMAL PROTEIN L20"/>
    <property type="match status" value="1"/>
</dbReference>
<dbReference type="Pfam" id="PF00453">
    <property type="entry name" value="Ribosomal_L20"/>
    <property type="match status" value="1"/>
</dbReference>
<dbReference type="PRINTS" id="PR00062">
    <property type="entry name" value="RIBOSOMALL20"/>
</dbReference>
<dbReference type="SUPFAM" id="SSF74731">
    <property type="entry name" value="Ribosomal protein L20"/>
    <property type="match status" value="1"/>
</dbReference>
<dbReference type="PROSITE" id="PS00937">
    <property type="entry name" value="RIBOSOMAL_L20"/>
    <property type="match status" value="1"/>
</dbReference>
<geneLocation type="chloroplast"/>
<reference key="1">
    <citation type="journal article" date="1989" name="Mol. Gen. Genet.">
        <title>The complete sequence of the rice (Oryza sativa) chloroplast genome: intermolecular recombination between distinct tRNA genes accounts for a major plastid DNA inversion during the evolution of the cereals.</title>
        <authorList>
            <person name="Hiratsuka J."/>
            <person name="Shimada H."/>
            <person name="Whittier R."/>
            <person name="Ishibashi T."/>
            <person name="Sakamoto M."/>
            <person name="Mori M."/>
            <person name="Kondo C."/>
            <person name="Honji Y."/>
            <person name="Sun C.-R."/>
            <person name="Meng B.-Y."/>
            <person name="Li Y.-Q."/>
            <person name="Kanno A."/>
            <person name="Nishizawa Y."/>
            <person name="Hirai A."/>
            <person name="Shinozaki K."/>
            <person name="Sugiura M."/>
        </authorList>
    </citation>
    <scope>NUCLEOTIDE SEQUENCE [LARGE SCALE GENOMIC DNA]</scope>
    <source>
        <strain>cv. Nipponbare</strain>
    </source>
</reference>
<reference key="2">
    <citation type="journal article" date="2004" name="Plant Physiol.">
        <title>A comparison of rice chloroplast genomes.</title>
        <authorList>
            <person name="Tang J."/>
            <person name="Xia H."/>
            <person name="Cao M."/>
            <person name="Zhang X."/>
            <person name="Zeng W."/>
            <person name="Hu S."/>
            <person name="Tong W."/>
            <person name="Wang J."/>
            <person name="Wang J."/>
            <person name="Yu J."/>
            <person name="Yang H."/>
            <person name="Zhu L."/>
        </authorList>
    </citation>
    <scope>NUCLEOTIDE SEQUENCE [LARGE SCALE GENOMIC DNA]</scope>
    <source>
        <strain>cv. Nipponbare</strain>
    </source>
</reference>
<organism>
    <name type="scientific">Oryza sativa subsp. japonica</name>
    <name type="common">Rice</name>
    <dbReference type="NCBI Taxonomy" id="39947"/>
    <lineage>
        <taxon>Eukaryota</taxon>
        <taxon>Viridiplantae</taxon>
        <taxon>Streptophyta</taxon>
        <taxon>Embryophyta</taxon>
        <taxon>Tracheophyta</taxon>
        <taxon>Spermatophyta</taxon>
        <taxon>Magnoliopsida</taxon>
        <taxon>Liliopsida</taxon>
        <taxon>Poales</taxon>
        <taxon>Poaceae</taxon>
        <taxon>BOP clade</taxon>
        <taxon>Oryzoideae</taxon>
        <taxon>Oryzeae</taxon>
        <taxon>Oryzinae</taxon>
        <taxon>Oryza</taxon>
        <taxon>Oryza sativa</taxon>
    </lineage>
</organism>
<comment type="function">
    <text evidence="1">Binds directly to 23S ribosomal RNA and is necessary for the in vitro assembly process of the 50S ribosomal subunit. It is not involved in the protein synthesizing functions of that subunit (By similarity).</text>
</comment>
<comment type="subcellular location">
    <subcellularLocation>
        <location>Plastid</location>
        <location>Chloroplast</location>
    </subcellularLocation>
</comment>
<comment type="similarity">
    <text evidence="2">Belongs to the bacterial ribosomal protein bL20 family.</text>
</comment>